<accession>B8ZP43</accession>
<comment type="function">
    <text evidence="1">Catalyzes the folate-dependent formation of 5-methyl-uridine at position 54 (M-5-U54) in all tRNAs.</text>
</comment>
<comment type="catalytic activity">
    <reaction evidence="1">
        <text>uridine(54) in tRNA + (6R)-5,10-methylene-5,6,7,8-tetrahydrofolate + NADH + H(+) = 5-methyluridine(54) in tRNA + (6S)-5,6,7,8-tetrahydrofolate + NAD(+)</text>
        <dbReference type="Rhea" id="RHEA:16873"/>
        <dbReference type="Rhea" id="RHEA-COMP:10167"/>
        <dbReference type="Rhea" id="RHEA-COMP:10193"/>
        <dbReference type="ChEBI" id="CHEBI:15378"/>
        <dbReference type="ChEBI" id="CHEBI:15636"/>
        <dbReference type="ChEBI" id="CHEBI:57453"/>
        <dbReference type="ChEBI" id="CHEBI:57540"/>
        <dbReference type="ChEBI" id="CHEBI:57945"/>
        <dbReference type="ChEBI" id="CHEBI:65315"/>
        <dbReference type="ChEBI" id="CHEBI:74447"/>
        <dbReference type="EC" id="2.1.1.74"/>
    </reaction>
</comment>
<comment type="catalytic activity">
    <reaction evidence="1">
        <text>uridine(54) in tRNA + (6R)-5,10-methylene-5,6,7,8-tetrahydrofolate + NADPH + H(+) = 5-methyluridine(54) in tRNA + (6S)-5,6,7,8-tetrahydrofolate + NADP(+)</text>
        <dbReference type="Rhea" id="RHEA:62372"/>
        <dbReference type="Rhea" id="RHEA-COMP:10167"/>
        <dbReference type="Rhea" id="RHEA-COMP:10193"/>
        <dbReference type="ChEBI" id="CHEBI:15378"/>
        <dbReference type="ChEBI" id="CHEBI:15636"/>
        <dbReference type="ChEBI" id="CHEBI:57453"/>
        <dbReference type="ChEBI" id="CHEBI:57783"/>
        <dbReference type="ChEBI" id="CHEBI:58349"/>
        <dbReference type="ChEBI" id="CHEBI:65315"/>
        <dbReference type="ChEBI" id="CHEBI:74447"/>
        <dbReference type="EC" id="2.1.1.74"/>
    </reaction>
</comment>
<comment type="cofactor">
    <cofactor evidence="1">
        <name>FAD</name>
        <dbReference type="ChEBI" id="CHEBI:57692"/>
    </cofactor>
</comment>
<comment type="subcellular location">
    <subcellularLocation>
        <location evidence="1">Cytoplasm</location>
    </subcellularLocation>
</comment>
<comment type="similarity">
    <text evidence="1">Belongs to the MnmG family. TrmFO subfamily.</text>
</comment>
<gene>
    <name evidence="1" type="primary">trmFO</name>
    <name type="ordered locus">SPN23F08650</name>
</gene>
<dbReference type="EC" id="2.1.1.74" evidence="1"/>
<dbReference type="EMBL" id="FM211187">
    <property type="protein sequence ID" value="CAR68696.1"/>
    <property type="molecule type" value="Genomic_DNA"/>
</dbReference>
<dbReference type="RefSeq" id="WP_000083731.1">
    <property type="nucleotide sequence ID" value="NC_011900.1"/>
</dbReference>
<dbReference type="SMR" id="B8ZP43"/>
<dbReference type="GeneID" id="45653713"/>
<dbReference type="KEGG" id="sne:SPN23F08650"/>
<dbReference type="HOGENOM" id="CLU_033057_1_0_9"/>
<dbReference type="GO" id="GO:0005829">
    <property type="term" value="C:cytosol"/>
    <property type="evidence" value="ECO:0007669"/>
    <property type="project" value="TreeGrafter"/>
</dbReference>
<dbReference type="GO" id="GO:0050660">
    <property type="term" value="F:flavin adenine dinucleotide binding"/>
    <property type="evidence" value="ECO:0007669"/>
    <property type="project" value="UniProtKB-UniRule"/>
</dbReference>
<dbReference type="GO" id="GO:0047151">
    <property type="term" value="F:tRNA (uracil(54)-C5)-methyltransferase activity, 5,10-methylenetetrahydrofolate-dependent"/>
    <property type="evidence" value="ECO:0007669"/>
    <property type="project" value="UniProtKB-UniRule"/>
</dbReference>
<dbReference type="GO" id="GO:0030488">
    <property type="term" value="P:tRNA methylation"/>
    <property type="evidence" value="ECO:0007669"/>
    <property type="project" value="TreeGrafter"/>
</dbReference>
<dbReference type="GO" id="GO:0002098">
    <property type="term" value="P:tRNA wobble uridine modification"/>
    <property type="evidence" value="ECO:0007669"/>
    <property type="project" value="TreeGrafter"/>
</dbReference>
<dbReference type="FunFam" id="3.50.50.60:FF:000035">
    <property type="entry name" value="Methylenetetrahydrofolate--tRNA-(uracil-5-)-methyltransferase TrmFO"/>
    <property type="match status" value="1"/>
</dbReference>
<dbReference type="FunFam" id="3.50.50.60:FF:000040">
    <property type="entry name" value="Methylenetetrahydrofolate--tRNA-(uracil-5-)-methyltransferase TrmFO"/>
    <property type="match status" value="1"/>
</dbReference>
<dbReference type="Gene3D" id="3.50.50.60">
    <property type="entry name" value="FAD/NAD(P)-binding domain"/>
    <property type="match status" value="2"/>
</dbReference>
<dbReference type="HAMAP" id="MF_01037">
    <property type="entry name" value="TrmFO"/>
    <property type="match status" value="1"/>
</dbReference>
<dbReference type="InterPro" id="IPR036188">
    <property type="entry name" value="FAD/NAD-bd_sf"/>
</dbReference>
<dbReference type="InterPro" id="IPR002218">
    <property type="entry name" value="MnmG-rel"/>
</dbReference>
<dbReference type="InterPro" id="IPR020595">
    <property type="entry name" value="MnmG-rel_CS"/>
</dbReference>
<dbReference type="InterPro" id="IPR040131">
    <property type="entry name" value="MnmG_N"/>
</dbReference>
<dbReference type="InterPro" id="IPR004417">
    <property type="entry name" value="TrmFO"/>
</dbReference>
<dbReference type="NCBIfam" id="TIGR00137">
    <property type="entry name" value="gid_trmFO"/>
    <property type="match status" value="1"/>
</dbReference>
<dbReference type="NCBIfam" id="NF003739">
    <property type="entry name" value="PRK05335.1"/>
    <property type="match status" value="1"/>
</dbReference>
<dbReference type="PANTHER" id="PTHR11806">
    <property type="entry name" value="GLUCOSE INHIBITED DIVISION PROTEIN A"/>
    <property type="match status" value="1"/>
</dbReference>
<dbReference type="PANTHER" id="PTHR11806:SF2">
    <property type="entry name" value="METHYLENETETRAHYDROFOLATE--TRNA-(URACIL-5-)-METHYLTRANSFERASE TRMFO"/>
    <property type="match status" value="1"/>
</dbReference>
<dbReference type="Pfam" id="PF01134">
    <property type="entry name" value="GIDA"/>
    <property type="match status" value="1"/>
</dbReference>
<dbReference type="SUPFAM" id="SSF51905">
    <property type="entry name" value="FAD/NAD(P)-binding domain"/>
    <property type="match status" value="1"/>
</dbReference>
<dbReference type="PROSITE" id="PS01281">
    <property type="entry name" value="GIDA_2"/>
    <property type="match status" value="1"/>
</dbReference>
<evidence type="ECO:0000255" key="1">
    <source>
        <dbReference type="HAMAP-Rule" id="MF_01037"/>
    </source>
</evidence>
<sequence>MSQSYINVIGAGLAGSEAAYQIAERGIPVKLYEMRGVKSTPQHKTDNFAELVCSNSLRGDALTNAVGLLKEEMRRLGSVILESAEATRVPAGGALAVDRDGFSQMVTEKVVNHPLIEVVRDEITELPTDVITVVATGPLTSDALAEKIHALNNGDGFYFYDAAAPIIDVNTIDMSKVYLKSRYDKGEAAYLNAPMTKQEFMDFHEALVNAEEAPLNSFEKEKYFEGCMPIEVMAKRGIKTMLYGPMKPVGLEYPDDYTGPRDGEFKTPYAVVQLRQDNAAGSLYNIVGFQTHLKWGEQKRVFQMIPGLENAEFVRYGVMHRNSYMDSPNLLEQTYRSKKQPNLFFAGQMTGVEGYVESAASGLVAGINAARLFKEESEVIFPETTAIGSLAHYITHADSKHFQPMNVNFGIIKELEGERIRDKKARYEKIAERALADLEEFLTV</sequence>
<organism>
    <name type="scientific">Streptococcus pneumoniae (strain ATCC 700669 / Spain 23F-1)</name>
    <dbReference type="NCBI Taxonomy" id="561276"/>
    <lineage>
        <taxon>Bacteria</taxon>
        <taxon>Bacillati</taxon>
        <taxon>Bacillota</taxon>
        <taxon>Bacilli</taxon>
        <taxon>Lactobacillales</taxon>
        <taxon>Streptococcaceae</taxon>
        <taxon>Streptococcus</taxon>
    </lineage>
</organism>
<protein>
    <recommendedName>
        <fullName evidence="1">Methylenetetrahydrofolate--tRNA-(uracil-5-)-methyltransferase TrmFO</fullName>
        <ecNumber evidence="1">2.1.1.74</ecNumber>
    </recommendedName>
    <alternativeName>
        <fullName evidence="1">Folate-dependent tRNA (uracil-5-)-methyltransferase</fullName>
    </alternativeName>
    <alternativeName>
        <fullName evidence="1">Folate-dependent tRNA(M-5-U54)-methyltransferase</fullName>
    </alternativeName>
</protein>
<reference key="1">
    <citation type="journal article" date="2009" name="J. Bacteriol.">
        <title>Role of conjugative elements in the evolution of the multidrug-resistant pandemic clone Streptococcus pneumoniae Spain23F ST81.</title>
        <authorList>
            <person name="Croucher N.J."/>
            <person name="Walker D."/>
            <person name="Romero P."/>
            <person name="Lennard N."/>
            <person name="Paterson G.K."/>
            <person name="Bason N.C."/>
            <person name="Mitchell A.M."/>
            <person name="Quail M.A."/>
            <person name="Andrew P.W."/>
            <person name="Parkhill J."/>
            <person name="Bentley S.D."/>
            <person name="Mitchell T.J."/>
        </authorList>
    </citation>
    <scope>NUCLEOTIDE SEQUENCE [LARGE SCALE GENOMIC DNA]</scope>
    <source>
        <strain>ATCC 700669 / Spain 23F-1</strain>
    </source>
</reference>
<keyword id="KW-0963">Cytoplasm</keyword>
<keyword id="KW-0274">FAD</keyword>
<keyword id="KW-0285">Flavoprotein</keyword>
<keyword id="KW-0489">Methyltransferase</keyword>
<keyword id="KW-0520">NAD</keyword>
<keyword id="KW-0521">NADP</keyword>
<keyword id="KW-0808">Transferase</keyword>
<keyword id="KW-0819">tRNA processing</keyword>
<proteinExistence type="inferred from homology"/>
<name>TRMFO_STRPJ</name>
<feature type="chain" id="PRO_1000149478" description="Methylenetetrahydrofolate--tRNA-(uracil-5-)-methyltransferase TrmFO">
    <location>
        <begin position="1"/>
        <end position="444"/>
    </location>
</feature>
<feature type="binding site" evidence="1">
    <location>
        <begin position="10"/>
        <end position="15"/>
    </location>
    <ligand>
        <name>FAD</name>
        <dbReference type="ChEBI" id="CHEBI:57692"/>
    </ligand>
</feature>